<gene>
    <name evidence="1" type="primary">rpmG</name>
    <name type="ordered locus">BCc_051</name>
</gene>
<dbReference type="EMBL" id="CP000263">
    <property type="protein sequence ID" value="ABJ90530.1"/>
    <property type="molecule type" value="Genomic_DNA"/>
</dbReference>
<dbReference type="RefSeq" id="WP_011672449.1">
    <property type="nucleotide sequence ID" value="NC_008513.1"/>
</dbReference>
<dbReference type="SMR" id="Q058B9"/>
<dbReference type="STRING" id="372461.BCc_051"/>
<dbReference type="KEGG" id="bcc:BCc_051"/>
<dbReference type="eggNOG" id="COG0267">
    <property type="taxonomic scope" value="Bacteria"/>
</dbReference>
<dbReference type="HOGENOM" id="CLU_190949_1_1_6"/>
<dbReference type="Proteomes" id="UP000000669">
    <property type="component" value="Chromosome"/>
</dbReference>
<dbReference type="GO" id="GO:0022625">
    <property type="term" value="C:cytosolic large ribosomal subunit"/>
    <property type="evidence" value="ECO:0007669"/>
    <property type="project" value="TreeGrafter"/>
</dbReference>
<dbReference type="GO" id="GO:0003735">
    <property type="term" value="F:structural constituent of ribosome"/>
    <property type="evidence" value="ECO:0007669"/>
    <property type="project" value="InterPro"/>
</dbReference>
<dbReference type="GO" id="GO:0006412">
    <property type="term" value="P:translation"/>
    <property type="evidence" value="ECO:0007669"/>
    <property type="project" value="UniProtKB-UniRule"/>
</dbReference>
<dbReference type="Gene3D" id="2.20.28.120">
    <property type="entry name" value="Ribosomal protein L33"/>
    <property type="match status" value="1"/>
</dbReference>
<dbReference type="HAMAP" id="MF_00294">
    <property type="entry name" value="Ribosomal_bL33"/>
    <property type="match status" value="1"/>
</dbReference>
<dbReference type="InterPro" id="IPR001705">
    <property type="entry name" value="Ribosomal_bL33"/>
</dbReference>
<dbReference type="InterPro" id="IPR038584">
    <property type="entry name" value="Ribosomal_bL33_sf"/>
</dbReference>
<dbReference type="InterPro" id="IPR011332">
    <property type="entry name" value="Ribosomal_zn-bd"/>
</dbReference>
<dbReference type="NCBIfam" id="NF001860">
    <property type="entry name" value="PRK00595.1"/>
    <property type="match status" value="1"/>
</dbReference>
<dbReference type="NCBIfam" id="TIGR01023">
    <property type="entry name" value="rpmG_bact"/>
    <property type="match status" value="1"/>
</dbReference>
<dbReference type="PANTHER" id="PTHR15238">
    <property type="entry name" value="54S RIBOSOMAL PROTEIN L39, MITOCHONDRIAL"/>
    <property type="match status" value="1"/>
</dbReference>
<dbReference type="PANTHER" id="PTHR15238:SF1">
    <property type="entry name" value="LARGE RIBOSOMAL SUBUNIT PROTEIN BL33M"/>
    <property type="match status" value="1"/>
</dbReference>
<dbReference type="Pfam" id="PF00471">
    <property type="entry name" value="Ribosomal_L33"/>
    <property type="match status" value="1"/>
</dbReference>
<dbReference type="SUPFAM" id="SSF57829">
    <property type="entry name" value="Zn-binding ribosomal proteins"/>
    <property type="match status" value="1"/>
</dbReference>
<evidence type="ECO:0000255" key="1">
    <source>
        <dbReference type="HAMAP-Rule" id="MF_00294"/>
    </source>
</evidence>
<evidence type="ECO:0000305" key="2"/>
<proteinExistence type="inferred from homology"/>
<sequence>MAKTNRIKIKLISSSGSKHFYTTTKNKKNQINKLSLKKYDPIIKKHVIYQEKKI</sequence>
<name>RL33_BUCCC</name>
<reference key="1">
    <citation type="journal article" date="2006" name="Science">
        <title>A small microbial genome: the end of a long symbiotic relationship?</title>
        <authorList>
            <person name="Perez-Brocal V."/>
            <person name="Gil R."/>
            <person name="Ramos S."/>
            <person name="Lamelas A."/>
            <person name="Postigo M."/>
            <person name="Michelena J.M."/>
            <person name="Silva F.J."/>
            <person name="Moya A."/>
            <person name="Latorre A."/>
        </authorList>
    </citation>
    <scope>NUCLEOTIDE SEQUENCE [LARGE SCALE GENOMIC DNA]</scope>
    <source>
        <strain>Cc</strain>
    </source>
</reference>
<keyword id="KW-1185">Reference proteome</keyword>
<keyword id="KW-0687">Ribonucleoprotein</keyword>
<keyword id="KW-0689">Ribosomal protein</keyword>
<accession>Q058B9</accession>
<comment type="similarity">
    <text evidence="1">Belongs to the bacterial ribosomal protein bL33 family.</text>
</comment>
<protein>
    <recommendedName>
        <fullName evidence="1">Large ribosomal subunit protein bL33</fullName>
    </recommendedName>
    <alternativeName>
        <fullName evidence="2">50S ribosomal protein L33</fullName>
    </alternativeName>
</protein>
<feature type="chain" id="PRO_1000004153" description="Large ribosomal subunit protein bL33">
    <location>
        <begin position="1"/>
        <end position="54"/>
    </location>
</feature>
<organism>
    <name type="scientific">Buchnera aphidicola subsp. Cinara cedri (strain Cc)</name>
    <dbReference type="NCBI Taxonomy" id="372461"/>
    <lineage>
        <taxon>Bacteria</taxon>
        <taxon>Pseudomonadati</taxon>
        <taxon>Pseudomonadota</taxon>
        <taxon>Gammaproteobacteria</taxon>
        <taxon>Enterobacterales</taxon>
        <taxon>Erwiniaceae</taxon>
        <taxon>Buchnera</taxon>
    </lineage>
</organism>